<keyword id="KW-0067">ATP-binding</keyword>
<keyword id="KW-0963">Cytoplasm</keyword>
<keyword id="KW-0227">DNA damage</keyword>
<keyword id="KW-0234">DNA repair</keyword>
<keyword id="KW-0235">DNA replication</keyword>
<keyword id="KW-0238">DNA-binding</keyword>
<keyword id="KW-0547">Nucleotide-binding</keyword>
<keyword id="KW-1185">Reference proteome</keyword>
<keyword id="KW-0742">SOS response</keyword>
<accession>Q5E8Z0</accession>
<sequence length="359" mass="40890">MPLSRLIINDFRNITTCDIQLSSGFNFVIGPNGSGKTSVLEAIYLLGHGRSFKSSLTGRIIRNDCDELFIHGRFTTPEQFELPIGINKQRDGTTEVKIGGESGQKLAQLAKVLPLQLIHPEGFELVTDGPKFRRAFIDWGVFHVEPAFYDAWSRVKRLTKQRNALLKTANSYRELSYWDLELAQLSEKIDQWRVDYINHISEATQQICQAFLPEYDIKLSYYRGWDRETPYAELLKKNFERDKQLGYTVGGPNKADLRIKVAGTPVEDVLSRGQLKLMVCALRLAQGQHLTEATGKQCIYLIDDFASELDSHRRQLLAQYLKQTKAQVFISSITAEQIADMHDDESKMFEIEHGKIAQG</sequence>
<gene>
    <name evidence="1" type="primary">recF</name>
    <name type="ordered locus">VF_0011</name>
</gene>
<dbReference type="EMBL" id="CP000020">
    <property type="protein sequence ID" value="AAW84506.1"/>
    <property type="molecule type" value="Genomic_DNA"/>
</dbReference>
<dbReference type="RefSeq" id="WP_011260900.1">
    <property type="nucleotide sequence ID" value="NC_006840.2"/>
</dbReference>
<dbReference type="RefSeq" id="YP_203394.1">
    <property type="nucleotide sequence ID" value="NC_006840.2"/>
</dbReference>
<dbReference type="SMR" id="Q5E8Z0"/>
<dbReference type="STRING" id="312309.VF_0011"/>
<dbReference type="EnsemblBacteria" id="AAW84506">
    <property type="protein sequence ID" value="AAW84506"/>
    <property type="gene ID" value="VF_0011"/>
</dbReference>
<dbReference type="GeneID" id="54162640"/>
<dbReference type="KEGG" id="vfi:VF_0011"/>
<dbReference type="PATRIC" id="fig|312309.11.peg.12"/>
<dbReference type="eggNOG" id="COG1195">
    <property type="taxonomic scope" value="Bacteria"/>
</dbReference>
<dbReference type="HOGENOM" id="CLU_040267_0_0_6"/>
<dbReference type="OrthoDB" id="9803889at2"/>
<dbReference type="Proteomes" id="UP000000537">
    <property type="component" value="Chromosome I"/>
</dbReference>
<dbReference type="GO" id="GO:0005737">
    <property type="term" value="C:cytoplasm"/>
    <property type="evidence" value="ECO:0007669"/>
    <property type="project" value="UniProtKB-SubCell"/>
</dbReference>
<dbReference type="GO" id="GO:0005524">
    <property type="term" value="F:ATP binding"/>
    <property type="evidence" value="ECO:0007669"/>
    <property type="project" value="UniProtKB-UniRule"/>
</dbReference>
<dbReference type="GO" id="GO:0003697">
    <property type="term" value="F:single-stranded DNA binding"/>
    <property type="evidence" value="ECO:0007669"/>
    <property type="project" value="UniProtKB-UniRule"/>
</dbReference>
<dbReference type="GO" id="GO:0006260">
    <property type="term" value="P:DNA replication"/>
    <property type="evidence" value="ECO:0007669"/>
    <property type="project" value="UniProtKB-UniRule"/>
</dbReference>
<dbReference type="GO" id="GO:0000731">
    <property type="term" value="P:DNA synthesis involved in DNA repair"/>
    <property type="evidence" value="ECO:0007669"/>
    <property type="project" value="TreeGrafter"/>
</dbReference>
<dbReference type="GO" id="GO:0006302">
    <property type="term" value="P:double-strand break repair"/>
    <property type="evidence" value="ECO:0007669"/>
    <property type="project" value="TreeGrafter"/>
</dbReference>
<dbReference type="GO" id="GO:0009432">
    <property type="term" value="P:SOS response"/>
    <property type="evidence" value="ECO:0007669"/>
    <property type="project" value="UniProtKB-UniRule"/>
</dbReference>
<dbReference type="FunFam" id="1.20.1050.90:FF:000001">
    <property type="entry name" value="DNA replication and repair protein RecF"/>
    <property type="match status" value="1"/>
</dbReference>
<dbReference type="Gene3D" id="3.40.50.300">
    <property type="entry name" value="P-loop containing nucleotide triphosphate hydrolases"/>
    <property type="match status" value="1"/>
</dbReference>
<dbReference type="Gene3D" id="1.20.1050.90">
    <property type="entry name" value="RecF/RecN/SMC, N-terminal domain"/>
    <property type="match status" value="1"/>
</dbReference>
<dbReference type="HAMAP" id="MF_00365">
    <property type="entry name" value="RecF"/>
    <property type="match status" value="1"/>
</dbReference>
<dbReference type="InterPro" id="IPR001238">
    <property type="entry name" value="DNA-binding_RecF"/>
</dbReference>
<dbReference type="InterPro" id="IPR018078">
    <property type="entry name" value="DNA-binding_RecF_CS"/>
</dbReference>
<dbReference type="InterPro" id="IPR027417">
    <property type="entry name" value="P-loop_NTPase"/>
</dbReference>
<dbReference type="InterPro" id="IPR003395">
    <property type="entry name" value="RecF/RecN/SMC_N"/>
</dbReference>
<dbReference type="InterPro" id="IPR042174">
    <property type="entry name" value="RecF_2"/>
</dbReference>
<dbReference type="NCBIfam" id="TIGR00611">
    <property type="entry name" value="recf"/>
    <property type="match status" value="1"/>
</dbReference>
<dbReference type="PANTHER" id="PTHR32182">
    <property type="entry name" value="DNA REPLICATION AND REPAIR PROTEIN RECF"/>
    <property type="match status" value="1"/>
</dbReference>
<dbReference type="PANTHER" id="PTHR32182:SF0">
    <property type="entry name" value="DNA REPLICATION AND REPAIR PROTEIN RECF"/>
    <property type="match status" value="1"/>
</dbReference>
<dbReference type="Pfam" id="PF02463">
    <property type="entry name" value="SMC_N"/>
    <property type="match status" value="1"/>
</dbReference>
<dbReference type="SUPFAM" id="SSF52540">
    <property type="entry name" value="P-loop containing nucleoside triphosphate hydrolases"/>
    <property type="match status" value="1"/>
</dbReference>
<dbReference type="PROSITE" id="PS00617">
    <property type="entry name" value="RECF_1"/>
    <property type="match status" value="1"/>
</dbReference>
<dbReference type="PROSITE" id="PS00618">
    <property type="entry name" value="RECF_2"/>
    <property type="match status" value="1"/>
</dbReference>
<proteinExistence type="inferred from homology"/>
<comment type="function">
    <text evidence="1">The RecF protein is involved in DNA metabolism; it is required for DNA replication and normal SOS inducibility. RecF binds preferentially to single-stranded, linear DNA. It also seems to bind ATP.</text>
</comment>
<comment type="subcellular location">
    <subcellularLocation>
        <location evidence="1">Cytoplasm</location>
    </subcellularLocation>
</comment>
<comment type="similarity">
    <text evidence="1">Belongs to the RecF family.</text>
</comment>
<reference key="1">
    <citation type="journal article" date="2005" name="Proc. Natl. Acad. Sci. U.S.A.">
        <title>Complete genome sequence of Vibrio fischeri: a symbiotic bacterium with pathogenic congeners.</title>
        <authorList>
            <person name="Ruby E.G."/>
            <person name="Urbanowski M."/>
            <person name="Campbell J."/>
            <person name="Dunn A."/>
            <person name="Faini M."/>
            <person name="Gunsalus R."/>
            <person name="Lostroh P."/>
            <person name="Lupp C."/>
            <person name="McCann J."/>
            <person name="Millikan D."/>
            <person name="Schaefer A."/>
            <person name="Stabb E."/>
            <person name="Stevens A."/>
            <person name="Visick K."/>
            <person name="Whistler C."/>
            <person name="Greenberg E.P."/>
        </authorList>
    </citation>
    <scope>NUCLEOTIDE SEQUENCE [LARGE SCALE GENOMIC DNA]</scope>
    <source>
        <strain>ATCC 700601 / ES114</strain>
    </source>
</reference>
<protein>
    <recommendedName>
        <fullName evidence="1">DNA replication and repair protein RecF</fullName>
    </recommendedName>
</protein>
<evidence type="ECO:0000255" key="1">
    <source>
        <dbReference type="HAMAP-Rule" id="MF_00365"/>
    </source>
</evidence>
<organism>
    <name type="scientific">Aliivibrio fischeri (strain ATCC 700601 / ES114)</name>
    <name type="common">Vibrio fischeri</name>
    <dbReference type="NCBI Taxonomy" id="312309"/>
    <lineage>
        <taxon>Bacteria</taxon>
        <taxon>Pseudomonadati</taxon>
        <taxon>Pseudomonadota</taxon>
        <taxon>Gammaproteobacteria</taxon>
        <taxon>Vibrionales</taxon>
        <taxon>Vibrionaceae</taxon>
        <taxon>Aliivibrio</taxon>
    </lineage>
</organism>
<name>RECF_ALIF1</name>
<feature type="chain" id="PRO_0000236160" description="DNA replication and repair protein RecF">
    <location>
        <begin position="1"/>
        <end position="359"/>
    </location>
</feature>
<feature type="binding site" evidence="1">
    <location>
        <begin position="30"/>
        <end position="37"/>
    </location>
    <ligand>
        <name>ATP</name>
        <dbReference type="ChEBI" id="CHEBI:30616"/>
    </ligand>
</feature>